<name>DAPE_RICAE</name>
<reference key="1">
    <citation type="journal article" date="2009" name="BMC Genomics">
        <title>Analysis of the Rickettsia africae genome reveals that virulence acquisition in Rickettsia species may be explained by genome reduction.</title>
        <authorList>
            <person name="Fournier P.-E."/>
            <person name="El Karkouri K."/>
            <person name="Leroy Q."/>
            <person name="Robert C."/>
            <person name="Giumelli B."/>
            <person name="Renesto P."/>
            <person name="Socolovschi C."/>
            <person name="Parola P."/>
            <person name="Audic S."/>
            <person name="Raoult D."/>
        </authorList>
    </citation>
    <scope>NUCLEOTIDE SEQUENCE [LARGE SCALE GENOMIC DNA]</scope>
    <source>
        <strain>ESF-5</strain>
    </source>
</reference>
<feature type="chain" id="PRO_1000215922" description="Succinyl-diaminopimelate desuccinylase">
    <location>
        <begin position="1"/>
        <end position="381"/>
    </location>
</feature>
<feature type="active site" evidence="1">
    <location>
        <position position="71"/>
    </location>
</feature>
<feature type="active site" description="Proton acceptor" evidence="1">
    <location>
        <position position="137"/>
    </location>
</feature>
<feature type="binding site" evidence="1">
    <location>
        <position position="69"/>
    </location>
    <ligand>
        <name>Zn(2+)</name>
        <dbReference type="ChEBI" id="CHEBI:29105"/>
        <label>1</label>
    </ligand>
</feature>
<feature type="binding site" evidence="1">
    <location>
        <position position="103"/>
    </location>
    <ligand>
        <name>Zn(2+)</name>
        <dbReference type="ChEBI" id="CHEBI:29105"/>
        <label>1</label>
    </ligand>
</feature>
<feature type="binding site" evidence="1">
    <location>
        <position position="103"/>
    </location>
    <ligand>
        <name>Zn(2+)</name>
        <dbReference type="ChEBI" id="CHEBI:29105"/>
        <label>2</label>
    </ligand>
</feature>
<feature type="binding site" evidence="1">
    <location>
        <position position="138"/>
    </location>
    <ligand>
        <name>Zn(2+)</name>
        <dbReference type="ChEBI" id="CHEBI:29105"/>
        <label>2</label>
    </ligand>
</feature>
<feature type="binding site" evidence="1">
    <location>
        <position position="166"/>
    </location>
    <ligand>
        <name>Zn(2+)</name>
        <dbReference type="ChEBI" id="CHEBI:29105"/>
        <label>1</label>
    </ligand>
</feature>
<feature type="binding site" evidence="1">
    <location>
        <position position="355"/>
    </location>
    <ligand>
        <name>Zn(2+)</name>
        <dbReference type="ChEBI" id="CHEBI:29105"/>
        <label>2</label>
    </ligand>
</feature>
<protein>
    <recommendedName>
        <fullName evidence="1">Succinyl-diaminopimelate desuccinylase</fullName>
        <shortName evidence="1">SDAP desuccinylase</shortName>
        <ecNumber evidence="1">3.5.1.18</ecNumber>
    </recommendedName>
    <alternativeName>
        <fullName evidence="1">N-succinyl-LL-2,6-diaminoheptanedioate amidohydrolase</fullName>
    </alternativeName>
</protein>
<accession>C3PM12</accession>
<proteinExistence type="inferred from homology"/>
<gene>
    <name evidence="1" type="primary">dapE</name>
    <name type="ordered locus">RAF_ORF1234</name>
</gene>
<evidence type="ECO:0000255" key="1">
    <source>
        <dbReference type="HAMAP-Rule" id="MF_01690"/>
    </source>
</evidence>
<dbReference type="EC" id="3.5.1.18" evidence="1"/>
<dbReference type="EMBL" id="CP001612">
    <property type="protein sequence ID" value="ACP54002.1"/>
    <property type="molecule type" value="Genomic_DNA"/>
</dbReference>
<dbReference type="RefSeq" id="WP_012720113.1">
    <property type="nucleotide sequence ID" value="NC_012633.1"/>
</dbReference>
<dbReference type="SMR" id="C3PM12"/>
<dbReference type="GeneID" id="928496"/>
<dbReference type="KEGG" id="raf:RAF_ORF1234"/>
<dbReference type="HOGENOM" id="CLU_021802_4_0_5"/>
<dbReference type="UniPathway" id="UPA00034">
    <property type="reaction ID" value="UER00021"/>
</dbReference>
<dbReference type="Proteomes" id="UP000002305">
    <property type="component" value="Chromosome"/>
</dbReference>
<dbReference type="GO" id="GO:0008777">
    <property type="term" value="F:acetylornithine deacetylase activity"/>
    <property type="evidence" value="ECO:0007669"/>
    <property type="project" value="TreeGrafter"/>
</dbReference>
<dbReference type="GO" id="GO:0050897">
    <property type="term" value="F:cobalt ion binding"/>
    <property type="evidence" value="ECO:0007669"/>
    <property type="project" value="UniProtKB-UniRule"/>
</dbReference>
<dbReference type="GO" id="GO:0009014">
    <property type="term" value="F:succinyl-diaminopimelate desuccinylase activity"/>
    <property type="evidence" value="ECO:0007669"/>
    <property type="project" value="UniProtKB-UniRule"/>
</dbReference>
<dbReference type="GO" id="GO:0008270">
    <property type="term" value="F:zinc ion binding"/>
    <property type="evidence" value="ECO:0007669"/>
    <property type="project" value="UniProtKB-UniRule"/>
</dbReference>
<dbReference type="GO" id="GO:0019877">
    <property type="term" value="P:diaminopimelate biosynthetic process"/>
    <property type="evidence" value="ECO:0007669"/>
    <property type="project" value="UniProtKB-UniRule"/>
</dbReference>
<dbReference type="GO" id="GO:0006526">
    <property type="term" value="P:L-arginine biosynthetic process"/>
    <property type="evidence" value="ECO:0007669"/>
    <property type="project" value="TreeGrafter"/>
</dbReference>
<dbReference type="GO" id="GO:0009089">
    <property type="term" value="P:lysine biosynthetic process via diaminopimelate"/>
    <property type="evidence" value="ECO:0007669"/>
    <property type="project" value="UniProtKB-UniRule"/>
</dbReference>
<dbReference type="CDD" id="cd03891">
    <property type="entry name" value="M20_DapE_proteobac"/>
    <property type="match status" value="1"/>
</dbReference>
<dbReference type="Gene3D" id="3.30.70.360">
    <property type="match status" value="1"/>
</dbReference>
<dbReference type="Gene3D" id="3.40.630.10">
    <property type="entry name" value="Zn peptidases"/>
    <property type="match status" value="1"/>
</dbReference>
<dbReference type="HAMAP" id="MF_01690">
    <property type="entry name" value="DapE"/>
    <property type="match status" value="1"/>
</dbReference>
<dbReference type="InterPro" id="IPR001261">
    <property type="entry name" value="ArgE/DapE_CS"/>
</dbReference>
<dbReference type="InterPro" id="IPR036264">
    <property type="entry name" value="Bact_exopeptidase_dim_dom"/>
</dbReference>
<dbReference type="InterPro" id="IPR005941">
    <property type="entry name" value="DapE_proteobac"/>
</dbReference>
<dbReference type="InterPro" id="IPR002933">
    <property type="entry name" value="Peptidase_M20"/>
</dbReference>
<dbReference type="InterPro" id="IPR011650">
    <property type="entry name" value="Peptidase_M20_dimer"/>
</dbReference>
<dbReference type="InterPro" id="IPR050072">
    <property type="entry name" value="Peptidase_M20A"/>
</dbReference>
<dbReference type="NCBIfam" id="TIGR01246">
    <property type="entry name" value="dapE_proteo"/>
    <property type="match status" value="1"/>
</dbReference>
<dbReference type="NCBIfam" id="NF009557">
    <property type="entry name" value="PRK13009.1"/>
    <property type="match status" value="1"/>
</dbReference>
<dbReference type="PANTHER" id="PTHR43808">
    <property type="entry name" value="ACETYLORNITHINE DEACETYLASE"/>
    <property type="match status" value="1"/>
</dbReference>
<dbReference type="PANTHER" id="PTHR43808:SF31">
    <property type="entry name" value="N-ACETYL-L-CITRULLINE DEACETYLASE"/>
    <property type="match status" value="1"/>
</dbReference>
<dbReference type="Pfam" id="PF07687">
    <property type="entry name" value="M20_dimer"/>
    <property type="match status" value="1"/>
</dbReference>
<dbReference type="Pfam" id="PF01546">
    <property type="entry name" value="Peptidase_M20"/>
    <property type="match status" value="1"/>
</dbReference>
<dbReference type="SUPFAM" id="SSF55031">
    <property type="entry name" value="Bacterial exopeptidase dimerisation domain"/>
    <property type="match status" value="1"/>
</dbReference>
<dbReference type="SUPFAM" id="SSF53187">
    <property type="entry name" value="Zn-dependent exopeptidases"/>
    <property type="match status" value="1"/>
</dbReference>
<dbReference type="PROSITE" id="PS00759">
    <property type="entry name" value="ARGE_DAPE_CPG2_2"/>
    <property type="match status" value="1"/>
</dbReference>
<organism>
    <name type="scientific">Rickettsia africae (strain ESF-5)</name>
    <dbReference type="NCBI Taxonomy" id="347255"/>
    <lineage>
        <taxon>Bacteria</taxon>
        <taxon>Pseudomonadati</taxon>
        <taxon>Pseudomonadota</taxon>
        <taxon>Alphaproteobacteria</taxon>
        <taxon>Rickettsiales</taxon>
        <taxon>Rickettsiaceae</taxon>
        <taxon>Rickettsieae</taxon>
        <taxon>Rickettsia</taxon>
        <taxon>spotted fever group</taxon>
    </lineage>
</organism>
<comment type="function">
    <text evidence="1">Catalyzes the hydrolysis of N-succinyl-L,L-diaminopimelic acid (SDAP), forming succinate and LL-2,6-diaminopimelate (DAP), an intermediate involved in the bacterial biosynthesis of lysine and meso-diaminopimelic acid, an essential component of bacterial cell walls.</text>
</comment>
<comment type="catalytic activity">
    <reaction evidence="1">
        <text>N-succinyl-(2S,6S)-2,6-diaminopimelate + H2O = (2S,6S)-2,6-diaminopimelate + succinate</text>
        <dbReference type="Rhea" id="RHEA:22608"/>
        <dbReference type="ChEBI" id="CHEBI:15377"/>
        <dbReference type="ChEBI" id="CHEBI:30031"/>
        <dbReference type="ChEBI" id="CHEBI:57609"/>
        <dbReference type="ChEBI" id="CHEBI:58087"/>
        <dbReference type="EC" id="3.5.1.18"/>
    </reaction>
</comment>
<comment type="cofactor">
    <cofactor evidence="1">
        <name>Zn(2+)</name>
        <dbReference type="ChEBI" id="CHEBI:29105"/>
    </cofactor>
    <cofactor evidence="1">
        <name>Co(2+)</name>
        <dbReference type="ChEBI" id="CHEBI:48828"/>
    </cofactor>
    <text evidence="1">Binds 2 Zn(2+) or Co(2+) ions per subunit.</text>
</comment>
<comment type="pathway">
    <text evidence="1">Amino-acid biosynthesis; L-lysine biosynthesis via DAP pathway; LL-2,6-diaminopimelate from (S)-tetrahydrodipicolinate (succinylase route): step 3/3.</text>
</comment>
<comment type="subunit">
    <text evidence="1">Homodimer.</text>
</comment>
<comment type="similarity">
    <text evidence="1">Belongs to the peptidase M20A family. DapE subfamily.</text>
</comment>
<keyword id="KW-0028">Amino-acid biosynthesis</keyword>
<keyword id="KW-0170">Cobalt</keyword>
<keyword id="KW-0220">Diaminopimelate biosynthesis</keyword>
<keyword id="KW-0378">Hydrolase</keyword>
<keyword id="KW-0457">Lysine biosynthesis</keyword>
<keyword id="KW-0479">Metal-binding</keyword>
<keyword id="KW-0862">Zinc</keyword>
<sequence length="381" mass="42797">MYINYLKDLIGFKSVTPKSDGAIEYINDLLKQHGFKTEIKIFGDSKSEQVTNLYAVFGSNEPNICFVGHVDVVLAGNHELWHNASPFKVSQQDGKIYGRGAVDMKGAIACFLAASLDFIKNNTDFKGSISFLLTSDEEGKAKHGTKEMLQYIYDQGYKINFAIVGEPTCEKEIGDAIKIGRRGSVNFKLNIEGLSGHVAYPHKANNPLPCLIIILNELTNIKLDEGTEFFQRSNLEVTNIEVSNNTSNVIPASTEASFNIRFNNLHSAETLAKQVEEIIKQHCKEYKVDYKLEYSSSAESFIQNPSDKIKEFAKVVEHTLKIKPEFSTSGGTSDARFVKNYCPLVEFGLLSETAHKINEYTKISDLQKLYDVYYNFLMEIL</sequence>